<protein>
    <recommendedName>
        <fullName>Dynamin-related protein 5A</fullName>
    </recommendedName>
    <alternativeName>
        <fullName>Soybean dynamin-like protein 5A</fullName>
        <shortName>SDL5A</shortName>
    </alternativeName>
</protein>
<dbReference type="EMBL" id="U36430">
    <property type="protein sequence ID" value="AAC49183.1"/>
    <property type="molecule type" value="mRNA"/>
</dbReference>
<dbReference type="PIR" id="S63668">
    <property type="entry name" value="S63668"/>
</dbReference>
<dbReference type="RefSeq" id="NP_001236182.1">
    <property type="nucleotide sequence ID" value="NM_001249253.1"/>
</dbReference>
<dbReference type="SMR" id="Q39828"/>
<dbReference type="FunCoup" id="Q39828">
    <property type="interactions" value="4164"/>
</dbReference>
<dbReference type="STRING" id="3847.Q39828"/>
<dbReference type="PaxDb" id="3847-GLYMA08G02700.1"/>
<dbReference type="EnsemblPlants" id="KRH41321">
    <property type="protein sequence ID" value="KRH41321"/>
    <property type="gene ID" value="GLYMA_08G023300"/>
</dbReference>
<dbReference type="GeneID" id="100037461"/>
<dbReference type="Gramene" id="KRH41321">
    <property type="protein sequence ID" value="KRH41321"/>
    <property type="gene ID" value="GLYMA_08G023300"/>
</dbReference>
<dbReference type="KEGG" id="gmx:100037461"/>
<dbReference type="eggNOG" id="KOG0446">
    <property type="taxonomic scope" value="Eukaryota"/>
</dbReference>
<dbReference type="HOGENOM" id="CLU_008964_5_3_1"/>
<dbReference type="InParanoid" id="Q39828"/>
<dbReference type="OMA" id="RESEPTH"/>
<dbReference type="OrthoDB" id="5061070at2759"/>
<dbReference type="Proteomes" id="UP000008827">
    <property type="component" value="Chromosome 8"/>
</dbReference>
<dbReference type="GO" id="GO:0005737">
    <property type="term" value="C:cytoplasm"/>
    <property type="evidence" value="ECO:0000318"/>
    <property type="project" value="GO_Central"/>
</dbReference>
<dbReference type="GO" id="GO:0005874">
    <property type="term" value="C:microtubule"/>
    <property type="evidence" value="ECO:0000318"/>
    <property type="project" value="GO_Central"/>
</dbReference>
<dbReference type="GO" id="GO:0009524">
    <property type="term" value="C:phragmoplast"/>
    <property type="evidence" value="ECO:0007669"/>
    <property type="project" value="UniProtKB-SubCell"/>
</dbReference>
<dbReference type="GO" id="GO:0005886">
    <property type="term" value="C:plasma membrane"/>
    <property type="evidence" value="ECO:0000318"/>
    <property type="project" value="GO_Central"/>
</dbReference>
<dbReference type="GO" id="GO:0005525">
    <property type="term" value="F:GTP binding"/>
    <property type="evidence" value="ECO:0007669"/>
    <property type="project" value="UniProtKB-KW"/>
</dbReference>
<dbReference type="GO" id="GO:0003924">
    <property type="term" value="F:GTPase activity"/>
    <property type="evidence" value="ECO:0000318"/>
    <property type="project" value="GO_Central"/>
</dbReference>
<dbReference type="GO" id="GO:0008017">
    <property type="term" value="F:microtubule binding"/>
    <property type="evidence" value="ECO:0000318"/>
    <property type="project" value="GO_Central"/>
</dbReference>
<dbReference type="GO" id="GO:0051301">
    <property type="term" value="P:cell division"/>
    <property type="evidence" value="ECO:0007669"/>
    <property type="project" value="UniProtKB-KW"/>
</dbReference>
<dbReference type="GO" id="GO:0006898">
    <property type="term" value="P:receptor-mediated endocytosis"/>
    <property type="evidence" value="ECO:0000318"/>
    <property type="project" value="GO_Central"/>
</dbReference>
<dbReference type="CDD" id="cd08771">
    <property type="entry name" value="DLP_1"/>
    <property type="match status" value="1"/>
</dbReference>
<dbReference type="FunFam" id="3.40.50.300:FF:000228">
    <property type="entry name" value="dynamin-related protein 1E"/>
    <property type="match status" value="1"/>
</dbReference>
<dbReference type="FunFam" id="1.20.120.1240:FF:000010">
    <property type="entry name" value="Dynamin-related protein 5A"/>
    <property type="match status" value="1"/>
</dbReference>
<dbReference type="Gene3D" id="1.20.120.1240">
    <property type="entry name" value="Dynamin, middle domain"/>
    <property type="match status" value="1"/>
</dbReference>
<dbReference type="Gene3D" id="3.40.50.300">
    <property type="entry name" value="P-loop containing nucleotide triphosphate hydrolases"/>
    <property type="match status" value="1"/>
</dbReference>
<dbReference type="InterPro" id="IPR022812">
    <property type="entry name" value="Dynamin"/>
</dbReference>
<dbReference type="InterPro" id="IPR001401">
    <property type="entry name" value="Dynamin_GTPase"/>
</dbReference>
<dbReference type="InterPro" id="IPR019762">
    <property type="entry name" value="Dynamin_GTPase_CS"/>
</dbReference>
<dbReference type="InterPro" id="IPR045063">
    <property type="entry name" value="Dynamin_N"/>
</dbReference>
<dbReference type="InterPro" id="IPR000375">
    <property type="entry name" value="Dynamin_stalk"/>
</dbReference>
<dbReference type="InterPro" id="IPR030381">
    <property type="entry name" value="G_DYNAMIN_dom"/>
</dbReference>
<dbReference type="InterPro" id="IPR003130">
    <property type="entry name" value="GED"/>
</dbReference>
<dbReference type="InterPro" id="IPR020850">
    <property type="entry name" value="GED_dom"/>
</dbReference>
<dbReference type="InterPro" id="IPR027417">
    <property type="entry name" value="P-loop_NTPase"/>
</dbReference>
<dbReference type="PANTHER" id="PTHR11566">
    <property type="entry name" value="DYNAMIN"/>
    <property type="match status" value="1"/>
</dbReference>
<dbReference type="PANTHER" id="PTHR11566:SF207">
    <property type="entry name" value="DYNAMIN-RELATED PROTEIN 12A"/>
    <property type="match status" value="1"/>
</dbReference>
<dbReference type="Pfam" id="PF01031">
    <property type="entry name" value="Dynamin_M"/>
    <property type="match status" value="1"/>
</dbReference>
<dbReference type="Pfam" id="PF00350">
    <property type="entry name" value="Dynamin_N"/>
    <property type="match status" value="1"/>
</dbReference>
<dbReference type="Pfam" id="PF02212">
    <property type="entry name" value="GED"/>
    <property type="match status" value="1"/>
</dbReference>
<dbReference type="PRINTS" id="PR00195">
    <property type="entry name" value="DYNAMIN"/>
</dbReference>
<dbReference type="SMART" id="SM00053">
    <property type="entry name" value="DYNc"/>
    <property type="match status" value="1"/>
</dbReference>
<dbReference type="SMART" id="SM00302">
    <property type="entry name" value="GED"/>
    <property type="match status" value="1"/>
</dbReference>
<dbReference type="SUPFAM" id="SSF52540">
    <property type="entry name" value="P-loop containing nucleoside triphosphate hydrolases"/>
    <property type="match status" value="1"/>
</dbReference>
<dbReference type="PROSITE" id="PS00410">
    <property type="entry name" value="G_DYNAMIN_1"/>
    <property type="match status" value="1"/>
</dbReference>
<dbReference type="PROSITE" id="PS51718">
    <property type="entry name" value="G_DYNAMIN_2"/>
    <property type="match status" value="1"/>
</dbReference>
<dbReference type="PROSITE" id="PS51388">
    <property type="entry name" value="GED"/>
    <property type="match status" value="1"/>
</dbReference>
<accession>Q39828</accession>
<name>SDL5A_SOYBN</name>
<evidence type="ECO:0000250" key="1"/>
<evidence type="ECO:0000255" key="2">
    <source>
        <dbReference type="PROSITE-ProRule" id="PRU00720"/>
    </source>
</evidence>
<evidence type="ECO:0000255" key="3">
    <source>
        <dbReference type="PROSITE-ProRule" id="PRU01055"/>
    </source>
</evidence>
<keyword id="KW-0131">Cell cycle</keyword>
<keyword id="KW-0132">Cell division</keyword>
<keyword id="KW-0963">Cytoplasm</keyword>
<keyword id="KW-0206">Cytoskeleton</keyword>
<keyword id="KW-0342">GTP-binding</keyword>
<keyword id="KW-0378">Hydrolase</keyword>
<keyword id="KW-0493">Microtubule</keyword>
<keyword id="KW-0505">Motor protein</keyword>
<keyword id="KW-0547">Nucleotide-binding</keyword>
<keyword id="KW-1185">Reference proteome</keyword>
<reference key="1">
    <citation type="journal article" date="1996" name="EMBO J.">
        <title>Phragmoplastin, a dynamin-like protein associated with cell plate formation in plants.</title>
        <authorList>
            <person name="Gu X."/>
            <person name="Verma D.P.S."/>
        </authorList>
    </citation>
    <scope>NUCLEOTIDE SEQUENCE [MRNA]</scope>
    <source>
        <strain>cv. Prize</strain>
        <tissue>Root nodule</tissue>
    </source>
</reference>
<organism>
    <name type="scientific">Glycine max</name>
    <name type="common">Soybean</name>
    <name type="synonym">Glycine hispida</name>
    <dbReference type="NCBI Taxonomy" id="3847"/>
    <lineage>
        <taxon>Eukaryota</taxon>
        <taxon>Viridiplantae</taxon>
        <taxon>Streptophyta</taxon>
        <taxon>Embryophyta</taxon>
        <taxon>Tracheophyta</taxon>
        <taxon>Spermatophyta</taxon>
        <taxon>Magnoliopsida</taxon>
        <taxon>eudicotyledons</taxon>
        <taxon>Gunneridae</taxon>
        <taxon>Pentapetalae</taxon>
        <taxon>rosids</taxon>
        <taxon>fabids</taxon>
        <taxon>Fabales</taxon>
        <taxon>Fabaceae</taxon>
        <taxon>Papilionoideae</taxon>
        <taxon>50 kb inversion clade</taxon>
        <taxon>NPAAA clade</taxon>
        <taxon>indigoferoid/millettioid clade</taxon>
        <taxon>Phaseoleae</taxon>
        <taxon>Glycine</taxon>
        <taxon>Glycine subgen. Soja</taxon>
    </lineage>
</organism>
<comment type="function">
    <text evidence="1">Microtubule-associated force-producing protein.</text>
</comment>
<comment type="subcellular location">
    <subcellularLocation>
        <location evidence="1">Cytoplasm</location>
        <location evidence="1">Cytoskeleton</location>
        <location evidence="1">Phragmoplast</location>
    </subcellularLocation>
</comment>
<comment type="similarity">
    <text evidence="3">Belongs to the TRAFAC class dynamin-like GTPase superfamily. Dynamin/Fzo/YdjA family.</text>
</comment>
<feature type="chain" id="PRO_0000334585" description="Dynamin-related protein 5A">
    <location>
        <begin position="1"/>
        <end position="610"/>
    </location>
</feature>
<feature type="domain" description="Dynamin-type G" evidence="3">
    <location>
        <begin position="31"/>
        <end position="300"/>
    </location>
</feature>
<feature type="domain" description="GED" evidence="2">
    <location>
        <begin position="518"/>
        <end position="610"/>
    </location>
</feature>
<feature type="region of interest" description="G1 motif" evidence="3">
    <location>
        <begin position="41"/>
        <end position="48"/>
    </location>
</feature>
<feature type="region of interest" description="G2 motif" evidence="3">
    <location>
        <begin position="67"/>
        <end position="69"/>
    </location>
</feature>
<feature type="region of interest" description="G3 motif" evidence="3">
    <location>
        <begin position="142"/>
        <end position="145"/>
    </location>
</feature>
<feature type="region of interest" description="G4 motif" evidence="3">
    <location>
        <begin position="211"/>
        <end position="214"/>
    </location>
</feature>
<feature type="region of interest" description="G5 motif" evidence="3">
    <location>
        <begin position="241"/>
        <end position="244"/>
    </location>
</feature>
<feature type="binding site" evidence="1">
    <location>
        <begin position="41"/>
        <end position="48"/>
    </location>
    <ligand>
        <name>GTP</name>
        <dbReference type="ChEBI" id="CHEBI:37565"/>
    </ligand>
</feature>
<feature type="binding site" evidence="1">
    <location>
        <begin position="142"/>
        <end position="146"/>
    </location>
    <ligand>
        <name>GTP</name>
        <dbReference type="ChEBI" id="CHEBI:37565"/>
    </ligand>
</feature>
<feature type="binding site" evidence="1">
    <location>
        <begin position="211"/>
        <end position="214"/>
    </location>
    <ligand>
        <name>GTP</name>
        <dbReference type="ChEBI" id="CHEBI:37565"/>
    </ligand>
</feature>
<sequence>MENLISLVNKIQRACTALGDHGENSALPTLWDSLPAIAVVGGQSSGKSSVLESVVGKDFLPRGSGIVTRRPLVLQLHKIEEGSREYAEFLHLPRKRFTDFVAVRKEIQDETDRETGRTKQISTVPIHLSIYSPNVVNLTLVDLPGLTKVAVEGQPDSIVKDIEDMVRSYIEKPNCIILAISPANQDLATSDAIKISREVDPTGDRTIGVLTKIDLMDKGTDAVDILEGRAYRLKFPWIGVVNRSQQDINKNVDMIAARRREREYFNSTPEYKHLANRMGSEHLAKMLSKHLETVIKSKIPGIQSLINKTIAELEAELTRLGKPVAADAGGKLYAIMEICRSFDQIFKDHLDGVRPGGDKIYNVFDNQLPAALKRLQFDKQLSMENIRKLITEADGYQPHLIAPEQGYRRLIESSLITIRGPAEAAVDAVHSLLKDLVHKAISETLDLKQYPGLRVEVGAAAVDSLERMRDESKRATLQLVDMECGYLTVDFFRKLPQDVDKGGNPTHSIFDRYNDSYLRRIGTTILSYVNMVCATLRNSIPKSIVYCQVREAKRSLLDHFFTELGKMETKRLSSLLNEDPAIMERRSALAKRLELYRSAQAEIDAVAWSK</sequence>
<proteinExistence type="evidence at transcript level"/>